<keyword id="KW-0067">ATP-binding</keyword>
<keyword id="KW-0436">Ligase</keyword>
<keyword id="KW-0460">Magnesium</keyword>
<keyword id="KW-0479">Metal-binding</keyword>
<keyword id="KW-0547">Nucleotide-binding</keyword>
<keyword id="KW-0833">Ubl conjugation pathway</keyword>
<name>PAFA_PSECP</name>
<evidence type="ECO:0000255" key="1">
    <source>
        <dbReference type="HAMAP-Rule" id="MF_02111"/>
    </source>
</evidence>
<feature type="chain" id="PRO_0000395893" description="Pup--protein ligase">
    <location>
        <begin position="1"/>
        <end position="454"/>
    </location>
</feature>
<feature type="active site" description="Proton acceptor" evidence="1">
    <location>
        <position position="57"/>
    </location>
</feature>
<feature type="binding site" evidence="1">
    <location>
        <position position="9"/>
    </location>
    <ligand>
        <name>Mg(2+)</name>
        <dbReference type="ChEBI" id="CHEBI:18420"/>
    </ligand>
</feature>
<feature type="binding site" evidence="1">
    <location>
        <position position="53"/>
    </location>
    <ligand>
        <name>ATP</name>
        <dbReference type="ChEBI" id="CHEBI:30616"/>
    </ligand>
</feature>
<feature type="binding site" evidence="1">
    <location>
        <position position="55"/>
    </location>
    <ligand>
        <name>Mg(2+)</name>
        <dbReference type="ChEBI" id="CHEBI:18420"/>
    </ligand>
</feature>
<feature type="binding site" evidence="1">
    <location>
        <position position="63"/>
    </location>
    <ligand>
        <name>Mg(2+)</name>
        <dbReference type="ChEBI" id="CHEBI:18420"/>
    </ligand>
</feature>
<feature type="binding site" evidence="1">
    <location>
        <position position="66"/>
    </location>
    <ligand>
        <name>ATP</name>
        <dbReference type="ChEBI" id="CHEBI:30616"/>
    </ligand>
</feature>
<feature type="binding site" evidence="1">
    <location>
        <position position="420"/>
    </location>
    <ligand>
        <name>ATP</name>
        <dbReference type="ChEBI" id="CHEBI:30616"/>
    </ligand>
</feature>
<dbReference type="EC" id="6.3.1.19" evidence="1"/>
<dbReference type="EMBL" id="CP001341">
    <property type="protein sequence ID" value="ACL39896.1"/>
    <property type="molecule type" value="Genomic_DNA"/>
</dbReference>
<dbReference type="RefSeq" id="WP_015937116.1">
    <property type="nucleotide sequence ID" value="NC_011886.1"/>
</dbReference>
<dbReference type="SMR" id="B8H8L8"/>
<dbReference type="STRING" id="452863.Achl_1921"/>
<dbReference type="MEROPS" id="U72.001"/>
<dbReference type="KEGG" id="ach:Achl_1921"/>
<dbReference type="eggNOG" id="COG0638">
    <property type="taxonomic scope" value="Bacteria"/>
</dbReference>
<dbReference type="HOGENOM" id="CLU_040524_0_1_11"/>
<dbReference type="OrthoDB" id="9760627at2"/>
<dbReference type="UniPathway" id="UPA00997"/>
<dbReference type="UniPathway" id="UPA00998"/>
<dbReference type="Proteomes" id="UP000002505">
    <property type="component" value="Chromosome"/>
</dbReference>
<dbReference type="GO" id="GO:0005524">
    <property type="term" value="F:ATP binding"/>
    <property type="evidence" value="ECO:0007669"/>
    <property type="project" value="UniProtKB-UniRule"/>
</dbReference>
<dbReference type="GO" id="GO:0016879">
    <property type="term" value="F:ligase activity, forming carbon-nitrogen bonds"/>
    <property type="evidence" value="ECO:0007669"/>
    <property type="project" value="InterPro"/>
</dbReference>
<dbReference type="GO" id="GO:0000287">
    <property type="term" value="F:magnesium ion binding"/>
    <property type="evidence" value="ECO:0007669"/>
    <property type="project" value="UniProtKB-UniRule"/>
</dbReference>
<dbReference type="GO" id="GO:0019787">
    <property type="term" value="F:ubiquitin-like protein transferase activity"/>
    <property type="evidence" value="ECO:0007669"/>
    <property type="project" value="UniProtKB-UniRule"/>
</dbReference>
<dbReference type="GO" id="GO:0019941">
    <property type="term" value="P:modification-dependent protein catabolic process"/>
    <property type="evidence" value="ECO:0007669"/>
    <property type="project" value="UniProtKB-UniRule"/>
</dbReference>
<dbReference type="GO" id="GO:0010498">
    <property type="term" value="P:proteasomal protein catabolic process"/>
    <property type="evidence" value="ECO:0007669"/>
    <property type="project" value="UniProtKB-UniRule"/>
</dbReference>
<dbReference type="GO" id="GO:0070490">
    <property type="term" value="P:protein pupylation"/>
    <property type="evidence" value="ECO:0007669"/>
    <property type="project" value="UniProtKB-UniRule"/>
</dbReference>
<dbReference type="HAMAP" id="MF_02111">
    <property type="entry name" value="Pup_ligase"/>
    <property type="match status" value="1"/>
</dbReference>
<dbReference type="InterPro" id="IPR022279">
    <property type="entry name" value="Pup_ligase"/>
</dbReference>
<dbReference type="InterPro" id="IPR004347">
    <property type="entry name" value="Pup_ligase/deamidase"/>
</dbReference>
<dbReference type="NCBIfam" id="TIGR03686">
    <property type="entry name" value="pupylate_PafA"/>
    <property type="match status" value="1"/>
</dbReference>
<dbReference type="PANTHER" id="PTHR42307">
    <property type="entry name" value="PUP DEAMIDASE/DEPUPYLASE"/>
    <property type="match status" value="1"/>
</dbReference>
<dbReference type="PANTHER" id="PTHR42307:SF3">
    <property type="entry name" value="PUP--PROTEIN LIGASE"/>
    <property type="match status" value="1"/>
</dbReference>
<dbReference type="Pfam" id="PF03136">
    <property type="entry name" value="Pup_ligase"/>
    <property type="match status" value="1"/>
</dbReference>
<dbReference type="PIRSF" id="PIRSF018077">
    <property type="entry name" value="UCP018077"/>
    <property type="match status" value="1"/>
</dbReference>
<accession>B8H8L8</accession>
<organism>
    <name type="scientific">Pseudarthrobacter chlorophenolicus (strain ATCC 700700 / DSM 12829 / CIP 107037 / JCM 12360 / KCTC 9906 / NCIMB 13794 / A6)</name>
    <name type="common">Arthrobacter chlorophenolicus</name>
    <dbReference type="NCBI Taxonomy" id="452863"/>
    <lineage>
        <taxon>Bacteria</taxon>
        <taxon>Bacillati</taxon>
        <taxon>Actinomycetota</taxon>
        <taxon>Actinomycetes</taxon>
        <taxon>Micrococcales</taxon>
        <taxon>Micrococcaceae</taxon>
        <taxon>Pseudarthrobacter</taxon>
    </lineage>
</organism>
<reference key="1">
    <citation type="submission" date="2009-01" db="EMBL/GenBank/DDBJ databases">
        <title>Complete sequence of chromosome of Arthrobacter chlorophenolicus A6.</title>
        <authorList>
            <consortium name="US DOE Joint Genome Institute"/>
            <person name="Lucas S."/>
            <person name="Copeland A."/>
            <person name="Lapidus A."/>
            <person name="Glavina del Rio T."/>
            <person name="Tice H."/>
            <person name="Bruce D."/>
            <person name="Goodwin L."/>
            <person name="Pitluck S."/>
            <person name="Goltsman E."/>
            <person name="Clum A."/>
            <person name="Larimer F."/>
            <person name="Land M."/>
            <person name="Hauser L."/>
            <person name="Kyrpides N."/>
            <person name="Mikhailova N."/>
            <person name="Jansson J."/>
            <person name="Richardson P."/>
        </authorList>
    </citation>
    <scope>NUCLEOTIDE SEQUENCE [LARGE SCALE GENOMIC DNA]</scope>
    <source>
        <strain>ATCC 700700 / DSM 12829 / CIP 107037 / JCM 12360 / KCTC 9906 / NCIMB 13794 / A6</strain>
    </source>
</reference>
<comment type="function">
    <text evidence="1">Catalyzes the covalent attachment of the prokaryotic ubiquitin-like protein modifier Pup to the proteasomal substrate proteins, thereby targeting them for proteasomal degradation. This tagging system is termed pupylation. The ligation reaction involves the side-chain carboxylate of the C-terminal glutamate of Pup and the side-chain amino group of a substrate lysine.</text>
</comment>
<comment type="catalytic activity">
    <reaction evidence="1">
        <text>ATP + [prokaryotic ubiquitin-like protein]-L-glutamate + [protein]-L-lysine = ADP + phosphate + N(6)-([prokaryotic ubiquitin-like protein]-gamma-L-glutamyl)-[protein]-L-lysine.</text>
        <dbReference type="EC" id="6.3.1.19"/>
    </reaction>
</comment>
<comment type="pathway">
    <text evidence="1">Protein degradation; proteasomal Pup-dependent pathway.</text>
</comment>
<comment type="pathway">
    <text evidence="1">Protein modification; protein pupylation.</text>
</comment>
<comment type="miscellaneous">
    <text evidence="1">The reaction mechanism probably proceeds via the activation of Pup by phosphorylation of its C-terminal glutamate, which is then subject to nucleophilic attack by the substrate lysine, resulting in an isopeptide bond and the release of phosphate as a good leaving group.</text>
</comment>
<comment type="similarity">
    <text evidence="1">Belongs to the Pup ligase/Pup deamidase family. Pup-conjugating enzyme subfamily.</text>
</comment>
<sequence length="454" mass="51287">MDKRIFGIETEFGISYSSPDSRPLAPEEVARYLFRKVVSWGRSSNVFLTNGSRLYLDVGSHPEYATAECDDLAQLIAHDRAGELILDDLVDEAQARLAAEGFNGTVYLFKNNTDSAGNSYGSHENYLIPRRGEFSRLAEILIPFLVTRQLIAGAGKILKTPHGATYAFSQRADHIWEGVSSATTRSRPIINTRDEPHADAEFYRRLHVIVGDSNMSETTALMKVGTVDLVLRMIEAGVIMRDMRMENPIRSIREISHDLSGRALVRLANGRQLTALEIQQEYLTKVTAFVRENGAHNPHVPLILDLWERTLKAIESGDTRSIDTEIDWAIKKKLMDSYRERHGLGLDAPRIAQLDLTYHDISRSRGLYYLLQSRGAVRRLVDDTVIKDAVDAPPQTTRAKLRGDFVRRAQELGRDYTVDWVHLKLNDRAHQTILCKDPFRSVDERVDALLDSMG</sequence>
<proteinExistence type="inferred from homology"/>
<protein>
    <recommendedName>
        <fullName evidence="1">Pup--protein ligase</fullName>
        <ecNumber evidence="1">6.3.1.19</ecNumber>
    </recommendedName>
    <alternativeName>
        <fullName evidence="1">Proteasome accessory factor A</fullName>
    </alternativeName>
    <alternativeName>
        <fullName evidence="1">Pup-conjugating enzyme</fullName>
    </alternativeName>
</protein>
<gene>
    <name evidence="1" type="primary">pafA</name>
    <name type="ordered locus">Achl_1921</name>
</gene>